<sequence length="460" mass="50340">MVKEYKTITQIAGPLVFVEKTEPVGYKEIVTINMPDGTTRRGEVLDSSSDIVVIQIFEGTTGLDKECGVVFTGETLKLPASIDLLGRILSGSGEPLDGGPRIVPDQLLDINGAAMNPYARLPPKDFIQTGISTIDGTNTLVRGQKLPIFSASGLPHNEIALQIARQAAVPGSESAFAVVFAAMGITNEEAQYFMSDFEKTGALERAVVFLNLADDPAVERIVTPRMALTAAEYLAYEHGMHVLVILTDITNYAEALRQMGAARNEIPGRRGYPGYMYTDLATLYERAGIVKGAKGSVTQIPILSMPGDDITHPIPDLSGYITEGQIVVSRELHRKGIYPPINVLPSLSRLMNSGIGADKTREDHKAVSDQMYAGYAEGRDLRGLVAIVGKEALSERDVKFLEFADLFEDQFVRQGRNENRTIADTLDIGWKILAHLPENQLGRIDNKYIQKYHPAHRKGQ</sequence>
<comment type="function">
    <text evidence="1">Component of the A-type ATP synthase that produces ATP from ADP in the presence of a proton gradient across the membrane. The B chain is a regulatory subunit.</text>
</comment>
<comment type="subunit">
    <text evidence="1">Has multiple subunits with at least A(3), B(3), C, D, E, F, H, I and proteolipid K(x).</text>
</comment>
<comment type="subcellular location">
    <subcellularLocation>
        <location evidence="1">Cell membrane</location>
        <topology evidence="1">Peripheral membrane protein</topology>
    </subcellularLocation>
</comment>
<comment type="similarity">
    <text evidence="1">Belongs to the ATPase alpha/beta chains family.</text>
</comment>
<keyword id="KW-0066">ATP synthesis</keyword>
<keyword id="KW-1003">Cell membrane</keyword>
<keyword id="KW-0375">Hydrogen ion transport</keyword>
<keyword id="KW-0406">Ion transport</keyword>
<keyword id="KW-0472">Membrane</keyword>
<keyword id="KW-0813">Transport</keyword>
<protein>
    <recommendedName>
        <fullName evidence="1">A-type ATP synthase subunit B</fullName>
    </recommendedName>
</protein>
<dbReference type="EMBL" id="CP000099">
    <property type="protein sequence ID" value="AAZ69368.1"/>
    <property type="molecule type" value="Genomic_DNA"/>
</dbReference>
<dbReference type="SMR" id="Q46FH4"/>
<dbReference type="STRING" id="269797.Mbar_A0385"/>
<dbReference type="PaxDb" id="269797-Mbar_A0385"/>
<dbReference type="KEGG" id="mba:Mbar_A0385"/>
<dbReference type="eggNOG" id="arCOG00865">
    <property type="taxonomic scope" value="Archaea"/>
</dbReference>
<dbReference type="HOGENOM" id="CLU_022916_0_0_2"/>
<dbReference type="OrthoDB" id="32941at2157"/>
<dbReference type="GO" id="GO:0005886">
    <property type="term" value="C:plasma membrane"/>
    <property type="evidence" value="ECO:0007669"/>
    <property type="project" value="UniProtKB-SubCell"/>
</dbReference>
<dbReference type="GO" id="GO:0033178">
    <property type="term" value="C:proton-transporting two-sector ATPase complex, catalytic domain"/>
    <property type="evidence" value="ECO:0007669"/>
    <property type="project" value="InterPro"/>
</dbReference>
<dbReference type="GO" id="GO:0005524">
    <property type="term" value="F:ATP binding"/>
    <property type="evidence" value="ECO:0007669"/>
    <property type="project" value="UniProtKB-UniRule"/>
</dbReference>
<dbReference type="GO" id="GO:0046933">
    <property type="term" value="F:proton-transporting ATP synthase activity, rotational mechanism"/>
    <property type="evidence" value="ECO:0007669"/>
    <property type="project" value="UniProtKB-UniRule"/>
</dbReference>
<dbReference type="GO" id="GO:0042777">
    <property type="term" value="P:proton motive force-driven plasma membrane ATP synthesis"/>
    <property type="evidence" value="ECO:0007669"/>
    <property type="project" value="UniProtKB-UniRule"/>
</dbReference>
<dbReference type="CDD" id="cd18112">
    <property type="entry name" value="ATP-synt_V_A-type_beta_C"/>
    <property type="match status" value="1"/>
</dbReference>
<dbReference type="CDD" id="cd18118">
    <property type="entry name" value="ATP-synt_V_A-type_beta_N"/>
    <property type="match status" value="1"/>
</dbReference>
<dbReference type="CDD" id="cd01135">
    <property type="entry name" value="V_A-ATPase_B"/>
    <property type="match status" value="1"/>
</dbReference>
<dbReference type="Gene3D" id="3.40.50.12240">
    <property type="match status" value="1"/>
</dbReference>
<dbReference type="HAMAP" id="MF_00310">
    <property type="entry name" value="ATP_synth_B_arch"/>
    <property type="match status" value="1"/>
</dbReference>
<dbReference type="InterPro" id="IPR055190">
    <property type="entry name" value="ATP-synt_VA_C"/>
</dbReference>
<dbReference type="InterPro" id="IPR020003">
    <property type="entry name" value="ATPase_a/bsu_AS"/>
</dbReference>
<dbReference type="InterPro" id="IPR005724">
    <property type="entry name" value="ATPase_A1-cplx_bsu"/>
</dbReference>
<dbReference type="InterPro" id="IPR004100">
    <property type="entry name" value="ATPase_F1/V1/A1_a/bsu_N"/>
</dbReference>
<dbReference type="InterPro" id="IPR000194">
    <property type="entry name" value="ATPase_F1/V1/A1_a/bsu_nucl-bd"/>
</dbReference>
<dbReference type="InterPro" id="IPR027417">
    <property type="entry name" value="P-loop_NTPase"/>
</dbReference>
<dbReference type="InterPro" id="IPR022879">
    <property type="entry name" value="V-ATPase_su_B/beta"/>
</dbReference>
<dbReference type="NCBIfam" id="TIGR01041">
    <property type="entry name" value="ATP_syn_B_arch"/>
    <property type="match status" value="1"/>
</dbReference>
<dbReference type="NCBIfam" id="NF003235">
    <property type="entry name" value="PRK04196.1"/>
    <property type="match status" value="1"/>
</dbReference>
<dbReference type="PANTHER" id="PTHR43389">
    <property type="entry name" value="V-TYPE PROTON ATPASE SUBUNIT B"/>
    <property type="match status" value="1"/>
</dbReference>
<dbReference type="PANTHER" id="PTHR43389:SF4">
    <property type="entry name" value="V-TYPE PROTON ATPASE SUBUNIT B"/>
    <property type="match status" value="1"/>
</dbReference>
<dbReference type="Pfam" id="PF00006">
    <property type="entry name" value="ATP-synt_ab"/>
    <property type="match status" value="1"/>
</dbReference>
<dbReference type="Pfam" id="PF02874">
    <property type="entry name" value="ATP-synt_ab_N"/>
    <property type="match status" value="1"/>
</dbReference>
<dbReference type="Pfam" id="PF22919">
    <property type="entry name" value="ATP-synt_VA_C"/>
    <property type="match status" value="1"/>
</dbReference>
<dbReference type="PIRSF" id="PIRSF039114">
    <property type="entry name" value="V-ATPsynth_beta/V-ATPase_B"/>
    <property type="match status" value="1"/>
</dbReference>
<dbReference type="SUPFAM" id="SSF47917">
    <property type="entry name" value="C-terminal domain of alpha and beta subunits of F1 ATP synthase"/>
    <property type="match status" value="1"/>
</dbReference>
<dbReference type="SUPFAM" id="SSF52540">
    <property type="entry name" value="P-loop containing nucleoside triphosphate hydrolases"/>
    <property type="match status" value="1"/>
</dbReference>
<dbReference type="PROSITE" id="PS00152">
    <property type="entry name" value="ATPASE_ALPHA_BETA"/>
    <property type="match status" value="1"/>
</dbReference>
<name>AATB_METBF</name>
<reference key="1">
    <citation type="journal article" date="2006" name="J. Bacteriol.">
        <title>The Methanosarcina barkeri genome: comparative analysis with Methanosarcina acetivorans and Methanosarcina mazei reveals extensive rearrangement within methanosarcinal genomes.</title>
        <authorList>
            <person name="Maeder D.L."/>
            <person name="Anderson I."/>
            <person name="Brettin T.S."/>
            <person name="Bruce D.C."/>
            <person name="Gilna P."/>
            <person name="Han C.S."/>
            <person name="Lapidus A."/>
            <person name="Metcalf W.W."/>
            <person name="Saunders E."/>
            <person name="Tapia R."/>
            <person name="Sowers K.R."/>
        </authorList>
    </citation>
    <scope>NUCLEOTIDE SEQUENCE [LARGE SCALE GENOMIC DNA]</scope>
    <source>
        <strain>Fusaro / DSM 804</strain>
    </source>
</reference>
<organism>
    <name type="scientific">Methanosarcina barkeri (strain Fusaro / DSM 804)</name>
    <dbReference type="NCBI Taxonomy" id="269797"/>
    <lineage>
        <taxon>Archaea</taxon>
        <taxon>Methanobacteriati</taxon>
        <taxon>Methanobacteriota</taxon>
        <taxon>Stenosarchaea group</taxon>
        <taxon>Methanomicrobia</taxon>
        <taxon>Methanosarcinales</taxon>
        <taxon>Methanosarcinaceae</taxon>
        <taxon>Methanosarcina</taxon>
    </lineage>
</organism>
<accession>Q46FH4</accession>
<proteinExistence type="inferred from homology"/>
<evidence type="ECO:0000255" key="1">
    <source>
        <dbReference type="HAMAP-Rule" id="MF_00310"/>
    </source>
</evidence>
<gene>
    <name evidence="1" type="primary">atpB</name>
    <name type="ordered locus">Mbar_A0385</name>
</gene>
<feature type="chain" id="PRO_1000059375" description="A-type ATP synthase subunit B">
    <location>
        <begin position="1"/>
        <end position="460"/>
    </location>
</feature>